<feature type="chain" id="PRO_0000095421" description="Tyrosine recombinase XerD">
    <location>
        <begin position="1"/>
        <end position="295"/>
    </location>
</feature>
<feature type="domain" description="Core-binding (CB)" evidence="3">
    <location>
        <begin position="1"/>
        <end position="85"/>
    </location>
</feature>
<feature type="domain" description="Tyr recombinase" evidence="2">
    <location>
        <begin position="106"/>
        <end position="289"/>
    </location>
</feature>
<feature type="active site" evidence="1">
    <location>
        <position position="146"/>
    </location>
</feature>
<feature type="active site" evidence="1">
    <location>
        <position position="170"/>
    </location>
</feature>
<feature type="active site" evidence="1">
    <location>
        <position position="241"/>
    </location>
</feature>
<feature type="active site" evidence="1">
    <location>
        <position position="244"/>
    </location>
</feature>
<feature type="active site" evidence="1">
    <location>
        <position position="267"/>
    </location>
</feature>
<feature type="active site" description="O-(3'-phospho-DNA)-tyrosine intermediate" evidence="1">
    <location>
        <position position="276"/>
    </location>
</feature>
<proteinExistence type="inferred from homology"/>
<organism>
    <name type="scientific">Staphylococcus aureus (strain MW2)</name>
    <dbReference type="NCBI Taxonomy" id="196620"/>
    <lineage>
        <taxon>Bacteria</taxon>
        <taxon>Bacillati</taxon>
        <taxon>Bacillota</taxon>
        <taxon>Bacilli</taxon>
        <taxon>Bacillales</taxon>
        <taxon>Staphylococcaceae</taxon>
        <taxon>Staphylococcus</taxon>
    </lineage>
</organism>
<accession>P0A0P1</accession>
<accession>O87666</accession>
<accession>Q9KJF7</accession>
<accession>Q9RGN6</accession>
<gene>
    <name evidence="1" type="primary">xerD</name>
    <name type="ordered locus">MW1451</name>
</gene>
<dbReference type="EMBL" id="BA000033">
    <property type="protein sequence ID" value="BAB95316.1"/>
    <property type="molecule type" value="Genomic_DNA"/>
</dbReference>
<dbReference type="RefSeq" id="WP_000447733.1">
    <property type="nucleotide sequence ID" value="NC_003923.1"/>
</dbReference>
<dbReference type="SMR" id="P0A0P1"/>
<dbReference type="KEGG" id="sam:MW1451"/>
<dbReference type="HOGENOM" id="CLU_027562_9_6_9"/>
<dbReference type="GO" id="GO:0005737">
    <property type="term" value="C:cytoplasm"/>
    <property type="evidence" value="ECO:0007669"/>
    <property type="project" value="UniProtKB-SubCell"/>
</dbReference>
<dbReference type="GO" id="GO:0003677">
    <property type="term" value="F:DNA binding"/>
    <property type="evidence" value="ECO:0007669"/>
    <property type="project" value="UniProtKB-KW"/>
</dbReference>
<dbReference type="GO" id="GO:0009037">
    <property type="term" value="F:tyrosine-based site-specific recombinase activity"/>
    <property type="evidence" value="ECO:0007669"/>
    <property type="project" value="UniProtKB-UniRule"/>
</dbReference>
<dbReference type="GO" id="GO:0051301">
    <property type="term" value="P:cell division"/>
    <property type="evidence" value="ECO:0007669"/>
    <property type="project" value="UniProtKB-KW"/>
</dbReference>
<dbReference type="GO" id="GO:0007059">
    <property type="term" value="P:chromosome segregation"/>
    <property type="evidence" value="ECO:0007669"/>
    <property type="project" value="UniProtKB-UniRule"/>
</dbReference>
<dbReference type="GO" id="GO:0006313">
    <property type="term" value="P:DNA transposition"/>
    <property type="evidence" value="ECO:0007669"/>
    <property type="project" value="UniProtKB-UniRule"/>
</dbReference>
<dbReference type="CDD" id="cd00798">
    <property type="entry name" value="INT_XerDC_C"/>
    <property type="match status" value="1"/>
</dbReference>
<dbReference type="Gene3D" id="1.10.150.130">
    <property type="match status" value="1"/>
</dbReference>
<dbReference type="Gene3D" id="1.10.443.10">
    <property type="entry name" value="Intergrase catalytic core"/>
    <property type="match status" value="1"/>
</dbReference>
<dbReference type="HAMAP" id="MF_01808">
    <property type="entry name" value="Recomb_XerC_XerD"/>
    <property type="match status" value="1"/>
</dbReference>
<dbReference type="HAMAP" id="MF_01807">
    <property type="entry name" value="Recomb_XerD"/>
    <property type="match status" value="1"/>
</dbReference>
<dbReference type="InterPro" id="IPR044068">
    <property type="entry name" value="CB"/>
</dbReference>
<dbReference type="InterPro" id="IPR011010">
    <property type="entry name" value="DNA_brk_join_enz"/>
</dbReference>
<dbReference type="InterPro" id="IPR013762">
    <property type="entry name" value="Integrase-like_cat_sf"/>
</dbReference>
<dbReference type="InterPro" id="IPR002104">
    <property type="entry name" value="Integrase_catalytic"/>
</dbReference>
<dbReference type="InterPro" id="IPR010998">
    <property type="entry name" value="Integrase_recombinase_N"/>
</dbReference>
<dbReference type="InterPro" id="IPR004107">
    <property type="entry name" value="Integrase_SAM-like_N"/>
</dbReference>
<dbReference type="InterPro" id="IPR011932">
    <property type="entry name" value="Recomb_XerD"/>
</dbReference>
<dbReference type="InterPro" id="IPR023009">
    <property type="entry name" value="Tyrosine_recombinase_XerC/XerD"/>
</dbReference>
<dbReference type="InterPro" id="IPR050090">
    <property type="entry name" value="Tyrosine_recombinase_XerCD"/>
</dbReference>
<dbReference type="NCBIfam" id="NF001399">
    <property type="entry name" value="PRK00283.1"/>
    <property type="match status" value="1"/>
</dbReference>
<dbReference type="NCBIfam" id="NF040815">
    <property type="entry name" value="recomb_XerA_Arch"/>
    <property type="match status" value="1"/>
</dbReference>
<dbReference type="NCBIfam" id="TIGR02225">
    <property type="entry name" value="recomb_XerD"/>
    <property type="match status" value="1"/>
</dbReference>
<dbReference type="PANTHER" id="PTHR30349">
    <property type="entry name" value="PHAGE INTEGRASE-RELATED"/>
    <property type="match status" value="1"/>
</dbReference>
<dbReference type="PANTHER" id="PTHR30349:SF81">
    <property type="entry name" value="TYROSINE RECOMBINASE XERC"/>
    <property type="match status" value="1"/>
</dbReference>
<dbReference type="Pfam" id="PF02899">
    <property type="entry name" value="Phage_int_SAM_1"/>
    <property type="match status" value="1"/>
</dbReference>
<dbReference type="Pfam" id="PF00589">
    <property type="entry name" value="Phage_integrase"/>
    <property type="match status" value="1"/>
</dbReference>
<dbReference type="SUPFAM" id="SSF56349">
    <property type="entry name" value="DNA breaking-rejoining enzymes"/>
    <property type="match status" value="1"/>
</dbReference>
<dbReference type="PROSITE" id="PS51900">
    <property type="entry name" value="CB"/>
    <property type="match status" value="1"/>
</dbReference>
<dbReference type="PROSITE" id="PS51898">
    <property type="entry name" value="TYR_RECOMBINASE"/>
    <property type="match status" value="1"/>
</dbReference>
<evidence type="ECO:0000255" key="1">
    <source>
        <dbReference type="HAMAP-Rule" id="MF_01807"/>
    </source>
</evidence>
<evidence type="ECO:0000255" key="2">
    <source>
        <dbReference type="PROSITE-ProRule" id="PRU01246"/>
    </source>
</evidence>
<evidence type="ECO:0000255" key="3">
    <source>
        <dbReference type="PROSITE-ProRule" id="PRU01248"/>
    </source>
</evidence>
<sequence>METIIEEYLRFIQIEKGLSSNTIGAYRRDLKKYQDYMTEHHISHIDFIDRQLIQECLGHLIDQGQSAKSIARFISTIRSFHQFAIREKYAAKDPTVLLDSPKYDKKLPDVLNVDEVLALLETPDLNKINGYRDRTMLELLYATGMRVSELIHLELENVNLIMGFVRVFGKGDKERIVPLGDAVIEYLTTYIETIRPQLLKKTVTEVLFLNMHGKPLSRQAIWKMIKQNGVKANIKKTLTPHTLRHSFATHLLENGADLRAVQEMLGHSDISTTQLYTHVSKSQIRKMYNQFHPRA</sequence>
<comment type="function">
    <text evidence="1">Site-specific tyrosine recombinase, which acts by catalyzing the cutting and rejoining of the recombining DNA molecules. The XerC-XerD complex is essential to convert dimers of the bacterial chromosome into monomers to permit their segregation at cell division. It also contributes to the segregational stability of plasmids.</text>
</comment>
<comment type="subunit">
    <text evidence="1">Forms a cyclic heterotetrameric complex composed of two molecules of XerC and two molecules of XerD.</text>
</comment>
<comment type="subcellular location">
    <subcellularLocation>
        <location evidence="1">Cytoplasm</location>
    </subcellularLocation>
</comment>
<comment type="similarity">
    <text evidence="1">Belongs to the 'phage' integrase family. XerD subfamily.</text>
</comment>
<reference key="1">
    <citation type="journal article" date="2002" name="Lancet">
        <title>Genome and virulence determinants of high virulence community-acquired MRSA.</title>
        <authorList>
            <person name="Baba T."/>
            <person name="Takeuchi F."/>
            <person name="Kuroda M."/>
            <person name="Yuzawa H."/>
            <person name="Aoki K."/>
            <person name="Oguchi A."/>
            <person name="Nagai Y."/>
            <person name="Iwama N."/>
            <person name="Asano K."/>
            <person name="Naimi T."/>
            <person name="Kuroda H."/>
            <person name="Cui L."/>
            <person name="Yamamoto K."/>
            <person name="Hiramatsu K."/>
        </authorList>
    </citation>
    <scope>NUCLEOTIDE SEQUENCE [LARGE SCALE GENOMIC DNA]</scope>
    <source>
        <strain>MW2</strain>
    </source>
</reference>
<keyword id="KW-0131">Cell cycle</keyword>
<keyword id="KW-0132">Cell division</keyword>
<keyword id="KW-0159">Chromosome partition</keyword>
<keyword id="KW-0963">Cytoplasm</keyword>
<keyword id="KW-0229">DNA integration</keyword>
<keyword id="KW-0233">DNA recombination</keyword>
<keyword id="KW-0238">DNA-binding</keyword>
<name>XERD_STAAW</name>
<protein>
    <recommendedName>
        <fullName evidence="1">Tyrosine recombinase XerD</fullName>
    </recommendedName>
</protein>